<accession>Q2SQU8</accession>
<keyword id="KW-0997">Cell inner membrane</keyword>
<keyword id="KW-1003">Cell membrane</keyword>
<keyword id="KW-0350">Heme biosynthesis</keyword>
<keyword id="KW-0472">Membrane</keyword>
<keyword id="KW-1185">Reference proteome</keyword>
<keyword id="KW-0808">Transferase</keyword>
<keyword id="KW-0812">Transmembrane</keyword>
<keyword id="KW-1133">Transmembrane helix</keyword>
<reference key="1">
    <citation type="journal article" date="2005" name="Nucleic Acids Res.">
        <title>Genomic blueprint of Hahella chejuensis, a marine microbe producing an algicidal agent.</title>
        <authorList>
            <person name="Jeong H."/>
            <person name="Yim J.H."/>
            <person name="Lee C."/>
            <person name="Choi S.-H."/>
            <person name="Park Y.K."/>
            <person name="Yoon S.H."/>
            <person name="Hur C.-G."/>
            <person name="Kang H.-Y."/>
            <person name="Kim D."/>
            <person name="Lee H.H."/>
            <person name="Park K.H."/>
            <person name="Park S.-H."/>
            <person name="Park H.-S."/>
            <person name="Lee H.K."/>
            <person name="Oh T.K."/>
            <person name="Kim J.F."/>
        </authorList>
    </citation>
    <scope>NUCLEOTIDE SEQUENCE [LARGE SCALE GENOMIC DNA]</scope>
    <source>
        <strain>KCTC 2396</strain>
    </source>
</reference>
<sequence length="299" mass="32779">MKNTASTTAAAGWRDYYELCKPRVVALMMLTAVVGMLLASDQGMPWNALILGNLGIALLASSAAAINHIVDQKIDAVMARTQKRPIVQGRVDNVHALTFAFSLAVVGMAILAWGVNPLTAWLTLASLIGYAVVYTLFLKRATPQNIVLGGLAGAAPPLLGWTSVTGTVDPHALLLVLIIFAWTPPHFWALAVHRKDEYAKAGVPMLPVTHGDRYTKLHILLYTLMLFAASMLPFITGMCGWIYFVAALALGVRFLDWAWAMWRDSRKHAAIKTFRYSITYLMLLFVALLADHYIPVTLS</sequence>
<name>CYOE_HAHCH</name>
<protein>
    <recommendedName>
        <fullName evidence="1">Protoheme IX farnesyltransferase</fullName>
        <ecNumber evidence="1">2.5.1.141</ecNumber>
    </recommendedName>
    <alternativeName>
        <fullName evidence="1">Heme B farnesyltransferase</fullName>
    </alternativeName>
    <alternativeName>
        <fullName evidence="1">Heme O synthase</fullName>
    </alternativeName>
</protein>
<evidence type="ECO:0000255" key="1">
    <source>
        <dbReference type="HAMAP-Rule" id="MF_00154"/>
    </source>
</evidence>
<dbReference type="EC" id="2.5.1.141" evidence="1"/>
<dbReference type="EMBL" id="CP000155">
    <property type="protein sequence ID" value="ABC26976.1"/>
    <property type="molecule type" value="Genomic_DNA"/>
</dbReference>
<dbReference type="RefSeq" id="WP_011394053.1">
    <property type="nucleotide sequence ID" value="NC_007645.1"/>
</dbReference>
<dbReference type="SMR" id="Q2SQU8"/>
<dbReference type="STRING" id="349521.HCH_00054"/>
<dbReference type="KEGG" id="hch:HCH_00054"/>
<dbReference type="eggNOG" id="COG0109">
    <property type="taxonomic scope" value="Bacteria"/>
</dbReference>
<dbReference type="HOGENOM" id="CLU_029631_0_2_6"/>
<dbReference type="OrthoDB" id="9814417at2"/>
<dbReference type="UniPathway" id="UPA00834">
    <property type="reaction ID" value="UER00712"/>
</dbReference>
<dbReference type="Proteomes" id="UP000000238">
    <property type="component" value="Chromosome"/>
</dbReference>
<dbReference type="GO" id="GO:0005886">
    <property type="term" value="C:plasma membrane"/>
    <property type="evidence" value="ECO:0007669"/>
    <property type="project" value="UniProtKB-SubCell"/>
</dbReference>
<dbReference type="GO" id="GO:0008495">
    <property type="term" value="F:protoheme IX farnesyltransferase activity"/>
    <property type="evidence" value="ECO:0007669"/>
    <property type="project" value="UniProtKB-UniRule"/>
</dbReference>
<dbReference type="GO" id="GO:0048034">
    <property type="term" value="P:heme O biosynthetic process"/>
    <property type="evidence" value="ECO:0007669"/>
    <property type="project" value="UniProtKB-UniRule"/>
</dbReference>
<dbReference type="CDD" id="cd13957">
    <property type="entry name" value="PT_UbiA_Cox10"/>
    <property type="match status" value="1"/>
</dbReference>
<dbReference type="FunFam" id="1.10.357.140:FF:000001">
    <property type="entry name" value="Protoheme IX farnesyltransferase"/>
    <property type="match status" value="1"/>
</dbReference>
<dbReference type="Gene3D" id="1.10.357.140">
    <property type="entry name" value="UbiA prenyltransferase"/>
    <property type="match status" value="1"/>
</dbReference>
<dbReference type="HAMAP" id="MF_00154">
    <property type="entry name" value="CyoE_CtaB"/>
    <property type="match status" value="1"/>
</dbReference>
<dbReference type="InterPro" id="IPR006369">
    <property type="entry name" value="Protohaem_IX_farnesylTrfase"/>
</dbReference>
<dbReference type="InterPro" id="IPR000537">
    <property type="entry name" value="UbiA_prenyltransferase"/>
</dbReference>
<dbReference type="InterPro" id="IPR030470">
    <property type="entry name" value="UbiA_prenylTrfase_CS"/>
</dbReference>
<dbReference type="InterPro" id="IPR044878">
    <property type="entry name" value="UbiA_sf"/>
</dbReference>
<dbReference type="NCBIfam" id="TIGR01473">
    <property type="entry name" value="cyoE_ctaB"/>
    <property type="match status" value="1"/>
</dbReference>
<dbReference type="NCBIfam" id="NF003349">
    <property type="entry name" value="PRK04375.1-2"/>
    <property type="match status" value="1"/>
</dbReference>
<dbReference type="PANTHER" id="PTHR43448:SF7">
    <property type="entry name" value="4-HYDROXYBENZOATE SOLANESYLTRANSFERASE"/>
    <property type="match status" value="1"/>
</dbReference>
<dbReference type="PANTHER" id="PTHR43448">
    <property type="entry name" value="PROTOHEME IX FARNESYLTRANSFERASE, MITOCHONDRIAL"/>
    <property type="match status" value="1"/>
</dbReference>
<dbReference type="Pfam" id="PF01040">
    <property type="entry name" value="UbiA"/>
    <property type="match status" value="1"/>
</dbReference>
<dbReference type="PROSITE" id="PS00943">
    <property type="entry name" value="UBIA"/>
    <property type="match status" value="1"/>
</dbReference>
<comment type="function">
    <text evidence="1">Converts heme B (protoheme IX) to heme O by substitution of the vinyl group on carbon 2 of heme B porphyrin ring with a hydroxyethyl farnesyl side group.</text>
</comment>
<comment type="catalytic activity">
    <reaction evidence="1">
        <text>heme b + (2E,6E)-farnesyl diphosphate + H2O = Fe(II)-heme o + diphosphate</text>
        <dbReference type="Rhea" id="RHEA:28070"/>
        <dbReference type="ChEBI" id="CHEBI:15377"/>
        <dbReference type="ChEBI" id="CHEBI:33019"/>
        <dbReference type="ChEBI" id="CHEBI:60344"/>
        <dbReference type="ChEBI" id="CHEBI:60530"/>
        <dbReference type="ChEBI" id="CHEBI:175763"/>
        <dbReference type="EC" id="2.5.1.141"/>
    </reaction>
</comment>
<comment type="pathway">
    <text evidence="1">Porphyrin-containing compound metabolism; heme O biosynthesis; heme O from protoheme: step 1/1.</text>
</comment>
<comment type="subcellular location">
    <subcellularLocation>
        <location evidence="1">Cell inner membrane</location>
        <topology evidence="1">Multi-pass membrane protein</topology>
    </subcellularLocation>
</comment>
<comment type="miscellaneous">
    <text evidence="1">Carbon 2 of the heme B porphyrin ring is defined according to the Fischer nomenclature.</text>
</comment>
<comment type="similarity">
    <text evidence="1">Belongs to the UbiA prenyltransferase family. Protoheme IX farnesyltransferase subfamily.</text>
</comment>
<proteinExistence type="inferred from homology"/>
<gene>
    <name evidence="1" type="primary">cyoE</name>
    <name type="ordered locus">HCH_00054</name>
</gene>
<organism>
    <name type="scientific">Hahella chejuensis (strain KCTC 2396)</name>
    <dbReference type="NCBI Taxonomy" id="349521"/>
    <lineage>
        <taxon>Bacteria</taxon>
        <taxon>Pseudomonadati</taxon>
        <taxon>Pseudomonadota</taxon>
        <taxon>Gammaproteobacteria</taxon>
        <taxon>Oceanospirillales</taxon>
        <taxon>Hahellaceae</taxon>
        <taxon>Hahella</taxon>
    </lineage>
</organism>
<feature type="chain" id="PRO_0000326902" description="Protoheme IX farnesyltransferase">
    <location>
        <begin position="1"/>
        <end position="299"/>
    </location>
</feature>
<feature type="transmembrane region" description="Helical" evidence="1">
    <location>
        <begin position="24"/>
        <end position="44"/>
    </location>
</feature>
<feature type="transmembrane region" description="Helical" evidence="1">
    <location>
        <begin position="46"/>
        <end position="66"/>
    </location>
</feature>
<feature type="transmembrane region" description="Helical" evidence="1">
    <location>
        <begin position="94"/>
        <end position="114"/>
    </location>
</feature>
<feature type="transmembrane region" description="Helical" evidence="1">
    <location>
        <begin position="118"/>
        <end position="138"/>
    </location>
</feature>
<feature type="transmembrane region" description="Helical" evidence="1">
    <location>
        <begin position="146"/>
        <end position="166"/>
    </location>
</feature>
<feature type="transmembrane region" description="Helical" evidence="1">
    <location>
        <begin position="172"/>
        <end position="192"/>
    </location>
</feature>
<feature type="transmembrane region" description="Helical" evidence="1">
    <location>
        <begin position="232"/>
        <end position="252"/>
    </location>
</feature>
<feature type="transmembrane region" description="Helical" evidence="1">
    <location>
        <begin position="278"/>
        <end position="298"/>
    </location>
</feature>